<protein>
    <recommendedName>
        <fullName evidence="1">Large ribosomal subunit protein uL2</fullName>
    </recommendedName>
    <alternativeName>
        <fullName evidence="3">50S ribosomal protein L2</fullName>
    </alternativeName>
</protein>
<evidence type="ECO:0000255" key="1">
    <source>
        <dbReference type="HAMAP-Rule" id="MF_01320"/>
    </source>
</evidence>
<evidence type="ECO:0000256" key="2">
    <source>
        <dbReference type="SAM" id="MobiDB-lite"/>
    </source>
</evidence>
<evidence type="ECO:0000305" key="3"/>
<gene>
    <name evidence="1" type="primary">rplB</name>
    <name type="ordered locus">Bpet4949</name>
</gene>
<sequence>MALVKVKPTSAGRRGMVKVVSPNLHKGAPHAALLEKKTRGSGRNNNGHITIRHRGGGHKQHYRVVDFRRNKDGIPAKVERLEYDPNRTAHIALLCYADGERRYIIAPRGLEVGATLVSGIEAPIRAGNTLPIRNIPVGTTIHCIEMIPGKGAQMARSAGASAVLLAREGTYAQVRLRSGEVRRVHIECRATIGEVGNEEHSLRQIGKAGAMRWRGVRPTVRGVAMNPVDHPHGGGEGRTGEAREPVSPWGTPSKGFKTRRNKRTNNMIVQRRKRK</sequence>
<feature type="chain" id="PRO_1000141512" description="Large ribosomal subunit protein uL2">
    <location>
        <begin position="1"/>
        <end position="275"/>
    </location>
</feature>
<feature type="region of interest" description="Disordered" evidence="2">
    <location>
        <begin position="223"/>
        <end position="275"/>
    </location>
</feature>
<feature type="compositionally biased region" description="Basic and acidic residues" evidence="2">
    <location>
        <begin position="229"/>
        <end position="244"/>
    </location>
</feature>
<proteinExistence type="inferred from homology"/>
<organism>
    <name type="scientific">Bordetella petrii (strain ATCC BAA-461 / DSM 12804 / CCUG 43448)</name>
    <dbReference type="NCBI Taxonomy" id="340100"/>
    <lineage>
        <taxon>Bacteria</taxon>
        <taxon>Pseudomonadati</taxon>
        <taxon>Pseudomonadota</taxon>
        <taxon>Betaproteobacteria</taxon>
        <taxon>Burkholderiales</taxon>
        <taxon>Alcaligenaceae</taxon>
        <taxon>Bordetella</taxon>
    </lineage>
</organism>
<reference key="1">
    <citation type="journal article" date="2008" name="BMC Genomics">
        <title>The missing link: Bordetella petrii is endowed with both the metabolic versatility of environmental bacteria and virulence traits of pathogenic Bordetellae.</title>
        <authorList>
            <person name="Gross R."/>
            <person name="Guzman C.A."/>
            <person name="Sebaihia M."/>
            <person name="Martin dos Santos V.A.P."/>
            <person name="Pieper D.H."/>
            <person name="Koebnik R."/>
            <person name="Lechner M."/>
            <person name="Bartels D."/>
            <person name="Buhrmester J."/>
            <person name="Choudhuri J.V."/>
            <person name="Ebensen T."/>
            <person name="Gaigalat L."/>
            <person name="Herrmann S."/>
            <person name="Khachane A.N."/>
            <person name="Larisch C."/>
            <person name="Link S."/>
            <person name="Linke B."/>
            <person name="Meyer F."/>
            <person name="Mormann S."/>
            <person name="Nakunst D."/>
            <person name="Rueckert C."/>
            <person name="Schneiker-Bekel S."/>
            <person name="Schulze K."/>
            <person name="Voerholter F.-J."/>
            <person name="Yevsa T."/>
            <person name="Engle J.T."/>
            <person name="Goldman W.E."/>
            <person name="Puehler A."/>
            <person name="Goebel U.B."/>
            <person name="Goesmann A."/>
            <person name="Bloecker H."/>
            <person name="Kaiser O."/>
            <person name="Martinez-Arias R."/>
        </authorList>
    </citation>
    <scope>NUCLEOTIDE SEQUENCE [LARGE SCALE GENOMIC DNA]</scope>
    <source>
        <strain>ATCC BAA-461 / DSM 12804 / CCUG 43448</strain>
    </source>
</reference>
<name>RL2_BORPD</name>
<dbReference type="EMBL" id="AM902716">
    <property type="protein sequence ID" value="CAP45301.1"/>
    <property type="molecule type" value="Genomic_DNA"/>
</dbReference>
<dbReference type="SMR" id="A9IIZ6"/>
<dbReference type="STRING" id="94624.Bpet4949"/>
<dbReference type="KEGG" id="bpt:Bpet4949"/>
<dbReference type="eggNOG" id="COG0090">
    <property type="taxonomic scope" value="Bacteria"/>
</dbReference>
<dbReference type="Proteomes" id="UP000001225">
    <property type="component" value="Chromosome"/>
</dbReference>
<dbReference type="GO" id="GO:0015934">
    <property type="term" value="C:large ribosomal subunit"/>
    <property type="evidence" value="ECO:0007669"/>
    <property type="project" value="InterPro"/>
</dbReference>
<dbReference type="GO" id="GO:0019843">
    <property type="term" value="F:rRNA binding"/>
    <property type="evidence" value="ECO:0007669"/>
    <property type="project" value="UniProtKB-UniRule"/>
</dbReference>
<dbReference type="GO" id="GO:0003735">
    <property type="term" value="F:structural constituent of ribosome"/>
    <property type="evidence" value="ECO:0007669"/>
    <property type="project" value="InterPro"/>
</dbReference>
<dbReference type="GO" id="GO:0016740">
    <property type="term" value="F:transferase activity"/>
    <property type="evidence" value="ECO:0007669"/>
    <property type="project" value="InterPro"/>
</dbReference>
<dbReference type="GO" id="GO:0002181">
    <property type="term" value="P:cytoplasmic translation"/>
    <property type="evidence" value="ECO:0007669"/>
    <property type="project" value="TreeGrafter"/>
</dbReference>
<dbReference type="FunFam" id="2.30.30.30:FF:000001">
    <property type="entry name" value="50S ribosomal protein L2"/>
    <property type="match status" value="1"/>
</dbReference>
<dbReference type="FunFam" id="2.40.50.140:FF:000003">
    <property type="entry name" value="50S ribosomal protein L2"/>
    <property type="match status" value="1"/>
</dbReference>
<dbReference type="FunFam" id="4.10.950.10:FF:000001">
    <property type="entry name" value="50S ribosomal protein L2"/>
    <property type="match status" value="1"/>
</dbReference>
<dbReference type="Gene3D" id="2.30.30.30">
    <property type="match status" value="1"/>
</dbReference>
<dbReference type="Gene3D" id="2.40.50.140">
    <property type="entry name" value="Nucleic acid-binding proteins"/>
    <property type="match status" value="1"/>
</dbReference>
<dbReference type="Gene3D" id="4.10.950.10">
    <property type="entry name" value="Ribosomal protein L2, domain 3"/>
    <property type="match status" value="1"/>
</dbReference>
<dbReference type="HAMAP" id="MF_01320_B">
    <property type="entry name" value="Ribosomal_uL2_B"/>
    <property type="match status" value="1"/>
</dbReference>
<dbReference type="InterPro" id="IPR012340">
    <property type="entry name" value="NA-bd_OB-fold"/>
</dbReference>
<dbReference type="InterPro" id="IPR014722">
    <property type="entry name" value="Rib_uL2_dom2"/>
</dbReference>
<dbReference type="InterPro" id="IPR002171">
    <property type="entry name" value="Ribosomal_uL2"/>
</dbReference>
<dbReference type="InterPro" id="IPR005880">
    <property type="entry name" value="Ribosomal_uL2_bac/org-type"/>
</dbReference>
<dbReference type="InterPro" id="IPR022669">
    <property type="entry name" value="Ribosomal_uL2_C"/>
</dbReference>
<dbReference type="InterPro" id="IPR022671">
    <property type="entry name" value="Ribosomal_uL2_CS"/>
</dbReference>
<dbReference type="InterPro" id="IPR014726">
    <property type="entry name" value="Ribosomal_uL2_dom3"/>
</dbReference>
<dbReference type="InterPro" id="IPR022666">
    <property type="entry name" value="Ribosomal_uL2_RNA-bd_dom"/>
</dbReference>
<dbReference type="InterPro" id="IPR008991">
    <property type="entry name" value="Translation_prot_SH3-like_sf"/>
</dbReference>
<dbReference type="NCBIfam" id="TIGR01171">
    <property type="entry name" value="rplB_bact"/>
    <property type="match status" value="1"/>
</dbReference>
<dbReference type="PANTHER" id="PTHR13691:SF5">
    <property type="entry name" value="LARGE RIBOSOMAL SUBUNIT PROTEIN UL2M"/>
    <property type="match status" value="1"/>
</dbReference>
<dbReference type="PANTHER" id="PTHR13691">
    <property type="entry name" value="RIBOSOMAL PROTEIN L2"/>
    <property type="match status" value="1"/>
</dbReference>
<dbReference type="Pfam" id="PF00181">
    <property type="entry name" value="Ribosomal_L2"/>
    <property type="match status" value="1"/>
</dbReference>
<dbReference type="Pfam" id="PF03947">
    <property type="entry name" value="Ribosomal_L2_C"/>
    <property type="match status" value="1"/>
</dbReference>
<dbReference type="PIRSF" id="PIRSF002158">
    <property type="entry name" value="Ribosomal_L2"/>
    <property type="match status" value="1"/>
</dbReference>
<dbReference type="SMART" id="SM01383">
    <property type="entry name" value="Ribosomal_L2"/>
    <property type="match status" value="1"/>
</dbReference>
<dbReference type="SMART" id="SM01382">
    <property type="entry name" value="Ribosomal_L2_C"/>
    <property type="match status" value="1"/>
</dbReference>
<dbReference type="SUPFAM" id="SSF50249">
    <property type="entry name" value="Nucleic acid-binding proteins"/>
    <property type="match status" value="1"/>
</dbReference>
<dbReference type="SUPFAM" id="SSF50104">
    <property type="entry name" value="Translation proteins SH3-like domain"/>
    <property type="match status" value="1"/>
</dbReference>
<dbReference type="PROSITE" id="PS00467">
    <property type="entry name" value="RIBOSOMAL_L2"/>
    <property type="match status" value="1"/>
</dbReference>
<accession>A9IIZ6</accession>
<comment type="function">
    <text evidence="1">One of the primary rRNA binding proteins. Required for association of the 30S and 50S subunits to form the 70S ribosome, for tRNA binding and peptide bond formation. It has been suggested to have peptidyltransferase activity; this is somewhat controversial. Makes several contacts with the 16S rRNA in the 70S ribosome.</text>
</comment>
<comment type="subunit">
    <text evidence="1">Part of the 50S ribosomal subunit. Forms a bridge to the 30S subunit in the 70S ribosome.</text>
</comment>
<comment type="similarity">
    <text evidence="1">Belongs to the universal ribosomal protein uL2 family.</text>
</comment>
<keyword id="KW-0687">Ribonucleoprotein</keyword>
<keyword id="KW-0689">Ribosomal protein</keyword>
<keyword id="KW-0694">RNA-binding</keyword>
<keyword id="KW-0699">rRNA-binding</keyword>